<gene>
    <name evidence="2" type="primary">trmB</name>
    <name type="ordered locus">CE2696</name>
</gene>
<dbReference type="EC" id="2.1.1.33" evidence="2"/>
<dbReference type="EMBL" id="BA000035">
    <property type="protein sequence ID" value="BAC19506.1"/>
    <property type="molecule type" value="Genomic_DNA"/>
</dbReference>
<dbReference type="RefSeq" id="WP_006768937.1">
    <property type="nucleotide sequence ID" value="NC_004369.1"/>
</dbReference>
<dbReference type="SMR" id="Q8FM11"/>
<dbReference type="STRING" id="196164.gene:10743144"/>
<dbReference type="KEGG" id="cef:CE2696"/>
<dbReference type="eggNOG" id="COG0220">
    <property type="taxonomic scope" value="Bacteria"/>
</dbReference>
<dbReference type="HOGENOM" id="CLU_050910_0_2_11"/>
<dbReference type="OrthoDB" id="9802090at2"/>
<dbReference type="UniPathway" id="UPA00989"/>
<dbReference type="Proteomes" id="UP000001409">
    <property type="component" value="Chromosome"/>
</dbReference>
<dbReference type="GO" id="GO:0043527">
    <property type="term" value="C:tRNA methyltransferase complex"/>
    <property type="evidence" value="ECO:0007669"/>
    <property type="project" value="TreeGrafter"/>
</dbReference>
<dbReference type="GO" id="GO:0008176">
    <property type="term" value="F:tRNA (guanine(46)-N7)-methyltransferase activity"/>
    <property type="evidence" value="ECO:0007669"/>
    <property type="project" value="UniProtKB-UniRule"/>
</dbReference>
<dbReference type="CDD" id="cd02440">
    <property type="entry name" value="AdoMet_MTases"/>
    <property type="match status" value="1"/>
</dbReference>
<dbReference type="Gene3D" id="3.40.50.150">
    <property type="entry name" value="Vaccinia Virus protein VP39"/>
    <property type="match status" value="1"/>
</dbReference>
<dbReference type="HAMAP" id="MF_01057">
    <property type="entry name" value="tRNA_methyltr_TrmB"/>
    <property type="match status" value="1"/>
</dbReference>
<dbReference type="InterPro" id="IPR029063">
    <property type="entry name" value="SAM-dependent_MTases_sf"/>
</dbReference>
<dbReference type="InterPro" id="IPR003358">
    <property type="entry name" value="tRNA_(Gua-N-7)_MeTrfase_Trmb"/>
</dbReference>
<dbReference type="InterPro" id="IPR055361">
    <property type="entry name" value="tRNA_methyltr_TrmB_bact"/>
</dbReference>
<dbReference type="NCBIfam" id="TIGR00091">
    <property type="entry name" value="tRNA (guanosine(46)-N7)-methyltransferase TrmB"/>
    <property type="match status" value="1"/>
</dbReference>
<dbReference type="PANTHER" id="PTHR23417">
    <property type="entry name" value="3-DEOXY-D-MANNO-OCTULOSONIC-ACID TRANSFERASE/TRNA GUANINE-N 7 - -METHYLTRANSFERASE"/>
    <property type="match status" value="1"/>
</dbReference>
<dbReference type="PANTHER" id="PTHR23417:SF14">
    <property type="entry name" value="PENTACOTRIPEPTIDE-REPEAT REGION OF PRORP DOMAIN-CONTAINING PROTEIN"/>
    <property type="match status" value="1"/>
</dbReference>
<dbReference type="Pfam" id="PF02390">
    <property type="entry name" value="Methyltransf_4"/>
    <property type="match status" value="1"/>
</dbReference>
<dbReference type="SUPFAM" id="SSF53335">
    <property type="entry name" value="S-adenosyl-L-methionine-dependent methyltransferases"/>
    <property type="match status" value="1"/>
</dbReference>
<dbReference type="PROSITE" id="PS51625">
    <property type="entry name" value="SAM_MT_TRMB"/>
    <property type="match status" value="1"/>
</dbReference>
<accession>Q8FM11</accession>
<proteinExistence type="inferred from homology"/>
<reference key="1">
    <citation type="journal article" date="2003" name="Genome Res.">
        <title>Comparative complete genome sequence analysis of the amino acid replacements responsible for the thermostability of Corynebacterium efficiens.</title>
        <authorList>
            <person name="Nishio Y."/>
            <person name="Nakamura Y."/>
            <person name="Kawarabayasi Y."/>
            <person name="Usuda Y."/>
            <person name="Kimura E."/>
            <person name="Sugimoto S."/>
            <person name="Matsui K."/>
            <person name="Yamagishi A."/>
            <person name="Kikuchi H."/>
            <person name="Ikeo K."/>
            <person name="Gojobori T."/>
        </authorList>
    </citation>
    <scope>NUCLEOTIDE SEQUENCE [LARGE SCALE GENOMIC DNA]</scope>
    <source>
        <strain>DSM 44549 / YS-314 / AJ 12310 / JCM 11189 / NBRC 100395</strain>
    </source>
</reference>
<evidence type="ECO:0000250" key="1"/>
<evidence type="ECO:0000255" key="2">
    <source>
        <dbReference type="HAMAP-Rule" id="MF_01057"/>
    </source>
</evidence>
<evidence type="ECO:0000256" key="3">
    <source>
        <dbReference type="SAM" id="MobiDB-lite"/>
    </source>
</evidence>
<name>TRMB_COREF</name>
<keyword id="KW-0489">Methyltransferase</keyword>
<keyword id="KW-1185">Reference proteome</keyword>
<keyword id="KW-0949">S-adenosyl-L-methionine</keyword>
<keyword id="KW-0808">Transferase</keyword>
<keyword id="KW-0819">tRNA processing</keyword>
<feature type="chain" id="PRO_0000171323" description="tRNA (guanine-N(7)-)-methyltransferase">
    <location>
        <begin position="1"/>
        <end position="254"/>
    </location>
</feature>
<feature type="region of interest" description="Disordered" evidence="3">
    <location>
        <begin position="1"/>
        <end position="25"/>
    </location>
</feature>
<feature type="region of interest" description="Interaction with RNA" evidence="2">
    <location>
        <begin position="164"/>
        <end position="169"/>
    </location>
</feature>
<feature type="compositionally biased region" description="Basic and acidic residues" evidence="3">
    <location>
        <begin position="1"/>
        <end position="11"/>
    </location>
</feature>
<feature type="active site" evidence="1">
    <location>
        <position position="158"/>
    </location>
</feature>
<feature type="binding site" evidence="2">
    <location>
        <position position="83"/>
    </location>
    <ligand>
        <name>S-adenosyl-L-methionine</name>
        <dbReference type="ChEBI" id="CHEBI:59789"/>
    </ligand>
</feature>
<feature type="binding site" evidence="2">
    <location>
        <position position="108"/>
    </location>
    <ligand>
        <name>S-adenosyl-L-methionine</name>
        <dbReference type="ChEBI" id="CHEBI:59789"/>
    </ligand>
</feature>
<feature type="binding site" evidence="2">
    <location>
        <position position="135"/>
    </location>
    <ligand>
        <name>S-adenosyl-L-methionine</name>
        <dbReference type="ChEBI" id="CHEBI:59789"/>
    </ligand>
</feature>
<feature type="binding site" evidence="2">
    <location>
        <position position="158"/>
    </location>
    <ligand>
        <name>S-adenosyl-L-methionine</name>
        <dbReference type="ChEBI" id="CHEBI:59789"/>
    </ligand>
</feature>
<feature type="binding site" evidence="2">
    <location>
        <position position="162"/>
    </location>
    <ligand>
        <name>substrate</name>
    </ligand>
</feature>
<feature type="binding site" evidence="2">
    <location>
        <position position="194"/>
    </location>
    <ligand>
        <name>substrate</name>
    </ligand>
</feature>
<feature type="binding site" evidence="2">
    <location>
        <begin position="232"/>
        <end position="235"/>
    </location>
    <ligand>
        <name>substrate</name>
    </ligand>
</feature>
<comment type="function">
    <text evidence="2">Catalyzes the formation of N(7)-methylguanine at position 46 (m7G46) in tRNA.</text>
</comment>
<comment type="catalytic activity">
    <reaction evidence="2">
        <text>guanosine(46) in tRNA + S-adenosyl-L-methionine = N(7)-methylguanosine(46) in tRNA + S-adenosyl-L-homocysteine</text>
        <dbReference type="Rhea" id="RHEA:42708"/>
        <dbReference type="Rhea" id="RHEA-COMP:10188"/>
        <dbReference type="Rhea" id="RHEA-COMP:10189"/>
        <dbReference type="ChEBI" id="CHEBI:57856"/>
        <dbReference type="ChEBI" id="CHEBI:59789"/>
        <dbReference type="ChEBI" id="CHEBI:74269"/>
        <dbReference type="ChEBI" id="CHEBI:74480"/>
        <dbReference type="EC" id="2.1.1.33"/>
    </reaction>
</comment>
<comment type="pathway">
    <text evidence="2">tRNA modification; N(7)-methylguanine-tRNA biosynthesis.</text>
</comment>
<comment type="similarity">
    <text evidence="2">Belongs to the class I-like SAM-binding methyltransferase superfamily. TrmB family.</text>
</comment>
<protein>
    <recommendedName>
        <fullName evidence="2">tRNA (guanine-N(7)-)-methyltransferase</fullName>
        <ecNumber evidence="2">2.1.1.33</ecNumber>
    </recommendedName>
    <alternativeName>
        <fullName evidence="2">tRNA (guanine(46)-N(7))-methyltransferase</fullName>
    </alternativeName>
    <alternativeName>
        <fullName evidence="2">tRNA(m7G46)-methyltransferase</fullName>
    </alternativeName>
</protein>
<organism>
    <name type="scientific">Corynebacterium efficiens (strain DSM 44549 / YS-314 / AJ 12310 / JCM 11189 / NBRC 100395)</name>
    <dbReference type="NCBI Taxonomy" id="196164"/>
    <lineage>
        <taxon>Bacteria</taxon>
        <taxon>Bacillati</taxon>
        <taxon>Actinomycetota</taxon>
        <taxon>Actinomycetes</taxon>
        <taxon>Mycobacteriales</taxon>
        <taxon>Corynebacteriaceae</taxon>
        <taxon>Corynebacterium</taxon>
    </lineage>
</organism>
<sequence length="254" mass="28580">MSISDNSREELGELPAGRPLQSEFNDDLDYPRLGSVTFRRGTLTENQQTMWNEKWPELGRVLEDELIDIDAWFGRTGAKTIVEIGSGTGTSTAAMAPLEADTNIIAVELYKPGLAKLMGAVVRGGIDNIRMVRGDGIEVLNRMFADGSLDGVRIFFPDPWPKARHNKRRIIQSGPLNLIAKKLKPGGVLHVATDHADYAEWINELVEVEPLLEYKGWPWPECPQLTDRQVITKFEGKGLDKDHTINEYLWQKKQ</sequence>